<keyword id="KW-0574">Periplasm</keyword>
<keyword id="KW-0732">Signal</keyword>
<feature type="signal peptide" evidence="1">
    <location>
        <begin position="1"/>
        <end position="21"/>
    </location>
</feature>
<feature type="propeptide" id="PRO_0000316044" evidence="1">
    <location>
        <begin position="22"/>
        <end position="69"/>
    </location>
</feature>
<feature type="chain" id="PRO_1000017752" description="Acid shock protein">
    <location>
        <begin position="70"/>
        <end position="132"/>
    </location>
</feature>
<feature type="region of interest" description="Disordered" evidence="2">
    <location>
        <begin position="30"/>
        <end position="132"/>
    </location>
</feature>
<feature type="compositionally biased region" description="Low complexity" evidence="2">
    <location>
        <begin position="30"/>
        <end position="50"/>
    </location>
</feature>
<feature type="compositionally biased region" description="Basic residues" evidence="2">
    <location>
        <begin position="51"/>
        <end position="60"/>
    </location>
</feature>
<feature type="compositionally biased region" description="Low complexity" evidence="2">
    <location>
        <begin position="61"/>
        <end position="99"/>
    </location>
</feature>
<feature type="compositionally biased region" description="Basic residues" evidence="2">
    <location>
        <begin position="100"/>
        <end position="124"/>
    </location>
</feature>
<accession>A1JKC3</accession>
<protein>
    <recommendedName>
        <fullName evidence="1">Acid shock protein</fullName>
    </recommendedName>
</protein>
<organism>
    <name type="scientific">Yersinia enterocolitica serotype O:8 / biotype 1B (strain NCTC 13174 / 8081)</name>
    <dbReference type="NCBI Taxonomy" id="393305"/>
    <lineage>
        <taxon>Bacteria</taxon>
        <taxon>Pseudomonadati</taxon>
        <taxon>Pseudomonadota</taxon>
        <taxon>Gammaproteobacteria</taxon>
        <taxon>Enterobacterales</taxon>
        <taxon>Yersiniaceae</taxon>
        <taxon>Yersinia</taxon>
    </lineage>
</organism>
<evidence type="ECO:0000255" key="1">
    <source>
        <dbReference type="HAMAP-Rule" id="MF_00546"/>
    </source>
</evidence>
<evidence type="ECO:0000256" key="2">
    <source>
        <dbReference type="SAM" id="MobiDB-lite"/>
    </source>
</evidence>
<dbReference type="EMBL" id="AM286415">
    <property type="protein sequence ID" value="CAL11034.1"/>
    <property type="molecule type" value="Genomic_DNA"/>
</dbReference>
<dbReference type="RefSeq" id="WP_005173016.1">
    <property type="nucleotide sequence ID" value="NC_008800.1"/>
</dbReference>
<dbReference type="RefSeq" id="YP_001005271.1">
    <property type="nucleotide sequence ID" value="NC_008800.1"/>
</dbReference>
<dbReference type="KEGG" id="yen:YE0933"/>
<dbReference type="PATRIC" id="fig|393305.7.peg.1034"/>
<dbReference type="eggNOG" id="ENOG5032U9T">
    <property type="taxonomic scope" value="Bacteria"/>
</dbReference>
<dbReference type="HOGENOM" id="CLU_102486_1_0_6"/>
<dbReference type="Proteomes" id="UP000000642">
    <property type="component" value="Chromosome"/>
</dbReference>
<dbReference type="GO" id="GO:0042597">
    <property type="term" value="C:periplasmic space"/>
    <property type="evidence" value="ECO:0007669"/>
    <property type="project" value="UniProtKB-SubCell"/>
</dbReference>
<dbReference type="HAMAP" id="MF_00546">
    <property type="entry name" value="Asr"/>
    <property type="match status" value="1"/>
</dbReference>
<dbReference type="InterPro" id="IPR023497">
    <property type="entry name" value="Acid_shock"/>
</dbReference>
<dbReference type="NCBIfam" id="NF033636">
    <property type="entry name" value="acid_shock_Asr"/>
    <property type="match status" value="1"/>
</dbReference>
<dbReference type="Pfam" id="PF06392">
    <property type="entry name" value="Asr"/>
    <property type="match status" value="2"/>
</dbReference>
<reference key="1">
    <citation type="journal article" date="2006" name="PLoS Genet.">
        <title>The complete genome sequence and comparative genome analysis of the high pathogenicity Yersinia enterocolitica strain 8081.</title>
        <authorList>
            <person name="Thomson N.R."/>
            <person name="Howard S."/>
            <person name="Wren B.W."/>
            <person name="Holden M.T.G."/>
            <person name="Crossman L."/>
            <person name="Challis G.L."/>
            <person name="Churcher C."/>
            <person name="Mungall K."/>
            <person name="Brooks K."/>
            <person name="Chillingworth T."/>
            <person name="Feltwell T."/>
            <person name="Abdellah Z."/>
            <person name="Hauser H."/>
            <person name="Jagels K."/>
            <person name="Maddison M."/>
            <person name="Moule S."/>
            <person name="Sanders M."/>
            <person name="Whitehead S."/>
            <person name="Quail M.A."/>
            <person name="Dougan G."/>
            <person name="Parkhill J."/>
            <person name="Prentice M.B."/>
        </authorList>
    </citation>
    <scope>NUCLEOTIDE SEQUENCE [LARGE SCALE GENOMIC DNA]</scope>
    <source>
        <strain>NCTC 13174 / 8081</strain>
    </source>
</reference>
<comment type="function">
    <text evidence="1">Required for growth and/or survival at acidic conditions.</text>
</comment>
<comment type="subcellular location">
    <subcellularLocation>
        <location evidence="1">Periplasm</location>
    </subcellularLocation>
</comment>
<comment type="PTM">
    <text evidence="1">Proteolytic processing gives rise to the active protein.</text>
</comment>
<comment type="similarity">
    <text evidence="1">Belongs to the Asr family.</text>
</comment>
<name>ASR_YERE8</name>
<gene>
    <name evidence="1" type="primary">asr</name>
    <name type="ordered locus">YE0933</name>
</gene>
<proteinExistence type="inferred from homology"/>
<sequence>MKKVLALIVAATMGLSSVAFAAETTAAATAAPAATSTTAAPAVEKAAPAKATHHKKHKATKQTTEQKAQAAKKAVKKAPAQKAQAAKKAVKKAPVQKAQAAKKHVKKAPAQKAQAAKKHHKTAKKSATAPAA</sequence>